<protein>
    <recommendedName>
        <fullName>Mediator of RNA polymerase II transcription subunit 12</fullName>
    </recommendedName>
    <alternativeName>
        <fullName>Mediator complex subunit 12</fullName>
    </alternativeName>
</protein>
<sequence length="1583" mass="174417">MIPHSSAGVQQWGHHPLHALNPGAGRTDTASALGPSDLQLEKAPMSAPQPQLRQPAVVDLTTHSGDTSEREPPSKRLRLDLPSVASTGDASPASGNGEPRNTPSTSTPTAKPSSLSWRGRPVWSFQALISEIPGSGGMSEEDAAAVAQSGKPASPPPFPVLPWKYAPPEAAGNKSVKSRDSSPAKKVQTTPYHIECPSVAPVLKGQKVADFSPWTGNHPEDVLNEQTAKQGHYDRTQVSQNESNTARPSLYAQLKHRSGLQMLSSVFAAALEKRQSHNLVNAPSTFKPPPRVTLTDNKREAWLRDLANPSVPLRRLSRTIPHGIRGKALLDQCLSKWIPVNRAVWLAKCVGANEIRAFKRKGTSGAVVIGLEAKWVREWTAHVQQFLEGLVAACGTADWKMKMTYAVGLTARLFFERLLDDEQYLGWFLSSLEAASLNTVPVWLLMLGIYWDSIMRYRKRGRRLAEALLEKLRQVTNPEHATTLRPLVDRLSLHIRTLVVEHTSSVILPNSWAKYKDLVLSCLNMKDNTHKAIFQNVAERNARIQLSKDRQDSGQRSPQQRVIHLFDAVCSTHDVASAAAACLKTIDDKSLLVTKLLEWTATPFRCGLCRVYTAVRLLRKWKMSGVDIDTYILSFLTRTGNRASLTMDNIYHVISELVRSQTFSVGRYLQWLMAKGVSSSNQSDHSIDLYLLKQLPMTRLPDHVRNLRNTLLYRAGVPATLEDSTIAELKASIAGRLPNIFGNEVEHTMVVESPSLDLTWAVKSEIGQWLRRGISGHCRNATSAMAGITVPADRNVSRLTPDEFYHIRDVLESFGDLSMLADVVKQTTSCDDNIVLASAADTVNYHFDSFCVIGATSDLFRSLVESYARLKRLGTPNLDLVFSLIELGLRLPQECNTVALLRQDLLRIESKSALAAPSPLSDNPSTAINEADPSFRSKLDQLLSSGGGMDESTMASIFASLTNILTGRNEDVKLSANETCRYLAYLRPFHPKHFDAMLVRWVCGLLKSSARSTMPHILPPLIGVGCVTIHAFVFLVKKLLQSERIASKIPNPARLKMDILDLLVPPAPGQSRYFDLVTYRFHLAQQEFLLKYYKETLDIICDALSTNAAAAGINSELRSSATTLLRLLLAQEPEDVVQYCLQKISAQHSTFTSVLQDTLDQLLQSVSLHDPQVSMAENVIRTTDDFSLPFCQLKLQVLSNAESKENMGDGIVDVMFKAAVADTRAKGSNWIGLVRLMSPNSVQQIRERAEKEFFAVPLFAETLGDQSLSYAPNTEALETAKLYLTIIDKLAYSIPEAGVQSVGPILVEKMDLLLHKLVVMQTSLVTRQGVVSDQATQSRANFERALAFWFSALLRMIVIHRTAFNVPSSVPRATVVQDQSRLLVSIFCISLARLPTNILRLYPTADYFPHPISSEGYRPCPGILLQTHALDVAASLIDTFPDESRQQCARFLKDKCPPFLQFQNDNRFSYLLGPVPDAGTSNIPPPASVPSPAAAAASTPTPTPSSGLPPGSSTQQASSTLSGIPTGVSEDCVASRLRLQYRGRTIGPYPVRPWELLEDAAPIVGVNDTAVNLKFFDARRVRA</sequence>
<feature type="chain" id="PRO_0000312968" description="Mediator of RNA polymerase II transcription subunit 12">
    <location>
        <begin position="1"/>
        <end position="1583"/>
    </location>
</feature>
<feature type="region of interest" description="Disordered" evidence="2">
    <location>
        <begin position="1"/>
        <end position="117"/>
    </location>
</feature>
<feature type="region of interest" description="Disordered" evidence="2">
    <location>
        <begin position="1481"/>
        <end position="1525"/>
    </location>
</feature>
<feature type="compositionally biased region" description="Basic and acidic residues" evidence="2">
    <location>
        <begin position="66"/>
        <end position="79"/>
    </location>
</feature>
<feature type="compositionally biased region" description="Low complexity" evidence="2">
    <location>
        <begin position="102"/>
        <end position="114"/>
    </location>
</feature>
<feature type="compositionally biased region" description="Low complexity" evidence="2">
    <location>
        <begin position="1490"/>
        <end position="1514"/>
    </location>
</feature>
<keyword id="KW-0010">Activator</keyword>
<keyword id="KW-0539">Nucleus</keyword>
<keyword id="KW-1185">Reference proteome</keyword>
<keyword id="KW-0678">Repressor</keyword>
<keyword id="KW-0804">Transcription</keyword>
<keyword id="KW-0805">Transcription regulation</keyword>
<name>SRB8_ASPTN</name>
<proteinExistence type="inferred from homology"/>
<dbReference type="EMBL" id="CH476606">
    <property type="protein sequence ID" value="EAU30937.1"/>
    <property type="status" value="ALT_SEQ"/>
    <property type="molecule type" value="Genomic_DNA"/>
</dbReference>
<dbReference type="RefSeq" id="XP_001217391.1">
    <property type="nucleotide sequence ID" value="XM_001217390.1"/>
</dbReference>
<dbReference type="SMR" id="Q0CBX9"/>
<dbReference type="STRING" id="341663.Q0CBX9"/>
<dbReference type="GeneID" id="4323238"/>
<dbReference type="eggNOG" id="KOG4522">
    <property type="taxonomic scope" value="Eukaryota"/>
</dbReference>
<dbReference type="OrthoDB" id="20828at2759"/>
<dbReference type="Proteomes" id="UP000007963">
    <property type="component" value="Unassembled WGS sequence"/>
</dbReference>
<dbReference type="GO" id="GO:0016592">
    <property type="term" value="C:mediator complex"/>
    <property type="evidence" value="ECO:0007669"/>
    <property type="project" value="InterPro"/>
</dbReference>
<dbReference type="GO" id="GO:0003712">
    <property type="term" value="F:transcription coregulator activity"/>
    <property type="evidence" value="ECO:0007669"/>
    <property type="project" value="InterPro"/>
</dbReference>
<dbReference type="GO" id="GO:0006357">
    <property type="term" value="P:regulation of transcription by RNA polymerase II"/>
    <property type="evidence" value="ECO:0007669"/>
    <property type="project" value="InterPro"/>
</dbReference>
<dbReference type="InterPro" id="IPR019035">
    <property type="entry name" value="Mediator_Med12"/>
</dbReference>
<dbReference type="PANTHER" id="PTHR46567">
    <property type="entry name" value="MEDIATOR OF RNA POLYMERASE II TRANSCRIPTION SUBUNIT 12"/>
    <property type="match status" value="1"/>
</dbReference>
<dbReference type="PANTHER" id="PTHR46567:SF1">
    <property type="entry name" value="MEDIATOR OF RNA POLYMERASE II TRANSCRIPTION SUBUNIT 12"/>
    <property type="match status" value="1"/>
</dbReference>
<dbReference type="Pfam" id="PF25326">
    <property type="entry name" value="ARM_SRB8"/>
    <property type="match status" value="1"/>
</dbReference>
<dbReference type="Pfam" id="PF09497">
    <property type="entry name" value="Med12"/>
    <property type="match status" value="1"/>
</dbReference>
<dbReference type="SMART" id="SM01281">
    <property type="entry name" value="Med12"/>
    <property type="match status" value="1"/>
</dbReference>
<accession>Q0CBX9</accession>
<reference key="1">
    <citation type="submission" date="2005-09" db="EMBL/GenBank/DDBJ databases">
        <title>Annotation of the Aspergillus terreus NIH2624 genome.</title>
        <authorList>
            <person name="Birren B.W."/>
            <person name="Lander E.S."/>
            <person name="Galagan J.E."/>
            <person name="Nusbaum C."/>
            <person name="Devon K."/>
            <person name="Henn M."/>
            <person name="Ma L.-J."/>
            <person name="Jaffe D.B."/>
            <person name="Butler J."/>
            <person name="Alvarez P."/>
            <person name="Gnerre S."/>
            <person name="Grabherr M."/>
            <person name="Kleber M."/>
            <person name="Mauceli E.W."/>
            <person name="Brockman W."/>
            <person name="Rounsley S."/>
            <person name="Young S.K."/>
            <person name="LaButti K."/>
            <person name="Pushparaj V."/>
            <person name="DeCaprio D."/>
            <person name="Crawford M."/>
            <person name="Koehrsen M."/>
            <person name="Engels R."/>
            <person name="Montgomery P."/>
            <person name="Pearson M."/>
            <person name="Howarth C."/>
            <person name="Larson L."/>
            <person name="Luoma S."/>
            <person name="White J."/>
            <person name="Alvarado L."/>
            <person name="Kodira C.D."/>
            <person name="Zeng Q."/>
            <person name="Oleary S."/>
            <person name="Yandava C."/>
            <person name="Denning D.W."/>
            <person name="Nierman W.C."/>
            <person name="Milne T."/>
            <person name="Madden K."/>
        </authorList>
    </citation>
    <scope>NUCLEOTIDE SEQUENCE [LARGE SCALE GENOMIC DNA]</scope>
    <source>
        <strain>NIH 2624 / FGSC A1156</strain>
    </source>
</reference>
<comment type="function">
    <text evidence="1">Component of the srb8-11 complex. The srb8-11 complex is a regulatory module of the Mediator complex which is itself involved in regulation of basal and activated RNA polymerase II-dependent transcription. The srb8-11 complex may be involved in the transcriptional repression of a subset of genes regulated by Mediator. It may inhibit the association of the Mediator complex with RNA polymerase II to form the holoenzyme complex (By similarity).</text>
</comment>
<comment type="subunit">
    <text evidence="1">Component of the srb8-11 complex, which itself associates with the Mediator complex.</text>
</comment>
<comment type="subcellular location">
    <subcellularLocation>
        <location evidence="3">Nucleus</location>
    </subcellularLocation>
</comment>
<comment type="similarity">
    <text evidence="3">Belongs to the Mediator complex subunit 12 family.</text>
</comment>
<comment type="sequence caution" evidence="3">
    <conflict type="erroneous gene model prediction">
        <sequence resource="EMBL-CDS" id="EAU30937"/>
    </conflict>
</comment>
<gene>
    <name type="primary">srb8</name>
    <name type="synonym">med12</name>
    <name type="ORF">ATEG_08805</name>
</gene>
<organism>
    <name type="scientific">Aspergillus terreus (strain NIH 2624 / FGSC A1156)</name>
    <dbReference type="NCBI Taxonomy" id="341663"/>
    <lineage>
        <taxon>Eukaryota</taxon>
        <taxon>Fungi</taxon>
        <taxon>Dikarya</taxon>
        <taxon>Ascomycota</taxon>
        <taxon>Pezizomycotina</taxon>
        <taxon>Eurotiomycetes</taxon>
        <taxon>Eurotiomycetidae</taxon>
        <taxon>Eurotiales</taxon>
        <taxon>Aspergillaceae</taxon>
        <taxon>Aspergillus</taxon>
        <taxon>Aspergillus subgen. Circumdati</taxon>
    </lineage>
</organism>
<evidence type="ECO:0000250" key="1"/>
<evidence type="ECO:0000256" key="2">
    <source>
        <dbReference type="SAM" id="MobiDB-lite"/>
    </source>
</evidence>
<evidence type="ECO:0000305" key="3"/>